<dbReference type="EMBL" id="CU468230">
    <property type="protein sequence ID" value="CAO99422.1"/>
    <property type="molecule type" value="Genomic_DNA"/>
</dbReference>
<dbReference type="SMR" id="B0VMK0"/>
<dbReference type="KEGG" id="abm:ABSDF0001"/>
<dbReference type="HOGENOM" id="CLU_026910_0_1_6"/>
<dbReference type="Proteomes" id="UP000001741">
    <property type="component" value="Chromosome"/>
</dbReference>
<dbReference type="GO" id="GO:0005737">
    <property type="term" value="C:cytoplasm"/>
    <property type="evidence" value="ECO:0007669"/>
    <property type="project" value="UniProtKB-SubCell"/>
</dbReference>
<dbReference type="GO" id="GO:0005886">
    <property type="term" value="C:plasma membrane"/>
    <property type="evidence" value="ECO:0007669"/>
    <property type="project" value="TreeGrafter"/>
</dbReference>
<dbReference type="GO" id="GO:0005524">
    <property type="term" value="F:ATP binding"/>
    <property type="evidence" value="ECO:0007669"/>
    <property type="project" value="UniProtKB-UniRule"/>
</dbReference>
<dbReference type="GO" id="GO:0016887">
    <property type="term" value="F:ATP hydrolysis activity"/>
    <property type="evidence" value="ECO:0007669"/>
    <property type="project" value="InterPro"/>
</dbReference>
<dbReference type="GO" id="GO:0003688">
    <property type="term" value="F:DNA replication origin binding"/>
    <property type="evidence" value="ECO:0007669"/>
    <property type="project" value="UniProtKB-UniRule"/>
</dbReference>
<dbReference type="GO" id="GO:0008289">
    <property type="term" value="F:lipid binding"/>
    <property type="evidence" value="ECO:0007669"/>
    <property type="project" value="UniProtKB-KW"/>
</dbReference>
<dbReference type="GO" id="GO:0006270">
    <property type="term" value="P:DNA replication initiation"/>
    <property type="evidence" value="ECO:0007669"/>
    <property type="project" value="UniProtKB-UniRule"/>
</dbReference>
<dbReference type="GO" id="GO:0006275">
    <property type="term" value="P:regulation of DNA replication"/>
    <property type="evidence" value="ECO:0007669"/>
    <property type="project" value="UniProtKB-UniRule"/>
</dbReference>
<dbReference type="CDD" id="cd00009">
    <property type="entry name" value="AAA"/>
    <property type="match status" value="1"/>
</dbReference>
<dbReference type="CDD" id="cd06571">
    <property type="entry name" value="Bac_DnaA_C"/>
    <property type="match status" value="1"/>
</dbReference>
<dbReference type="FunFam" id="1.10.8.60:FF:000003">
    <property type="entry name" value="Chromosomal replication initiator protein DnaA"/>
    <property type="match status" value="1"/>
</dbReference>
<dbReference type="FunFam" id="3.40.50.300:FF:000668">
    <property type="entry name" value="Chromosomal replication initiator protein DnaA"/>
    <property type="match status" value="1"/>
</dbReference>
<dbReference type="Gene3D" id="1.10.1750.10">
    <property type="match status" value="1"/>
</dbReference>
<dbReference type="Gene3D" id="1.10.8.60">
    <property type="match status" value="1"/>
</dbReference>
<dbReference type="Gene3D" id="3.30.300.180">
    <property type="match status" value="1"/>
</dbReference>
<dbReference type="Gene3D" id="3.40.50.300">
    <property type="entry name" value="P-loop containing nucleotide triphosphate hydrolases"/>
    <property type="match status" value="1"/>
</dbReference>
<dbReference type="HAMAP" id="MF_00377">
    <property type="entry name" value="DnaA_bact"/>
    <property type="match status" value="1"/>
</dbReference>
<dbReference type="InterPro" id="IPR003593">
    <property type="entry name" value="AAA+_ATPase"/>
</dbReference>
<dbReference type="InterPro" id="IPR001957">
    <property type="entry name" value="Chromosome_initiator_DnaA"/>
</dbReference>
<dbReference type="InterPro" id="IPR020591">
    <property type="entry name" value="Chromosome_initiator_DnaA-like"/>
</dbReference>
<dbReference type="InterPro" id="IPR018312">
    <property type="entry name" value="Chromosome_initiator_DnaA_CS"/>
</dbReference>
<dbReference type="InterPro" id="IPR013159">
    <property type="entry name" value="DnaA_C"/>
</dbReference>
<dbReference type="InterPro" id="IPR013317">
    <property type="entry name" value="DnaA_dom"/>
</dbReference>
<dbReference type="InterPro" id="IPR024633">
    <property type="entry name" value="DnaA_N_dom"/>
</dbReference>
<dbReference type="InterPro" id="IPR038454">
    <property type="entry name" value="DnaA_N_sf"/>
</dbReference>
<dbReference type="InterPro" id="IPR027417">
    <property type="entry name" value="P-loop_NTPase"/>
</dbReference>
<dbReference type="InterPro" id="IPR010921">
    <property type="entry name" value="Trp_repressor/repl_initiator"/>
</dbReference>
<dbReference type="NCBIfam" id="TIGR00362">
    <property type="entry name" value="DnaA"/>
    <property type="match status" value="1"/>
</dbReference>
<dbReference type="PANTHER" id="PTHR30050">
    <property type="entry name" value="CHROMOSOMAL REPLICATION INITIATOR PROTEIN DNAA"/>
    <property type="match status" value="1"/>
</dbReference>
<dbReference type="PANTHER" id="PTHR30050:SF2">
    <property type="entry name" value="CHROMOSOMAL REPLICATION INITIATOR PROTEIN DNAA"/>
    <property type="match status" value="1"/>
</dbReference>
<dbReference type="Pfam" id="PF00308">
    <property type="entry name" value="Bac_DnaA"/>
    <property type="match status" value="1"/>
</dbReference>
<dbReference type="Pfam" id="PF08299">
    <property type="entry name" value="Bac_DnaA_C"/>
    <property type="match status" value="1"/>
</dbReference>
<dbReference type="Pfam" id="PF11638">
    <property type="entry name" value="DnaA_N"/>
    <property type="match status" value="1"/>
</dbReference>
<dbReference type="PRINTS" id="PR00051">
    <property type="entry name" value="DNAA"/>
</dbReference>
<dbReference type="SMART" id="SM00382">
    <property type="entry name" value="AAA"/>
    <property type="match status" value="1"/>
</dbReference>
<dbReference type="SMART" id="SM00760">
    <property type="entry name" value="Bac_DnaA_C"/>
    <property type="match status" value="1"/>
</dbReference>
<dbReference type="SUPFAM" id="SSF52540">
    <property type="entry name" value="P-loop containing nucleoside triphosphate hydrolases"/>
    <property type="match status" value="1"/>
</dbReference>
<dbReference type="SUPFAM" id="SSF48295">
    <property type="entry name" value="TrpR-like"/>
    <property type="match status" value="1"/>
</dbReference>
<dbReference type="PROSITE" id="PS01008">
    <property type="entry name" value="DNAA"/>
    <property type="match status" value="1"/>
</dbReference>
<reference key="1">
    <citation type="journal article" date="2008" name="PLoS ONE">
        <title>Comparative analysis of Acinetobacters: three genomes for three lifestyles.</title>
        <authorList>
            <person name="Vallenet D."/>
            <person name="Nordmann P."/>
            <person name="Barbe V."/>
            <person name="Poirel L."/>
            <person name="Mangenot S."/>
            <person name="Bataille E."/>
            <person name="Dossat C."/>
            <person name="Gas S."/>
            <person name="Kreimeyer A."/>
            <person name="Lenoble P."/>
            <person name="Oztas S."/>
            <person name="Poulain J."/>
            <person name="Segurens B."/>
            <person name="Robert C."/>
            <person name="Abergel C."/>
            <person name="Claverie J.-M."/>
            <person name="Raoult D."/>
            <person name="Medigue C."/>
            <person name="Weissenbach J."/>
            <person name="Cruveiller S."/>
        </authorList>
    </citation>
    <scope>NUCLEOTIDE SEQUENCE [LARGE SCALE GENOMIC DNA]</scope>
    <source>
        <strain>SDF</strain>
    </source>
</reference>
<proteinExistence type="inferred from homology"/>
<evidence type="ECO:0000255" key="1">
    <source>
        <dbReference type="HAMAP-Rule" id="MF_00377"/>
    </source>
</evidence>
<evidence type="ECO:0000256" key="2">
    <source>
        <dbReference type="SAM" id="MobiDB-lite"/>
    </source>
</evidence>
<feature type="chain" id="PRO_1000121939" description="Chromosomal replication initiator protein DnaA">
    <location>
        <begin position="1"/>
        <end position="465"/>
    </location>
</feature>
<feature type="region of interest" description="Domain I, interacts with DnaA modulators" evidence="1">
    <location>
        <begin position="1"/>
        <end position="87"/>
    </location>
</feature>
<feature type="region of interest" description="Disordered" evidence="2">
    <location>
        <begin position="81"/>
        <end position="123"/>
    </location>
</feature>
<feature type="region of interest" description="Domain II" evidence="1">
    <location>
        <begin position="88"/>
        <end position="127"/>
    </location>
</feature>
<feature type="region of interest" description="Domain III, AAA+ region" evidence="1">
    <location>
        <begin position="128"/>
        <end position="345"/>
    </location>
</feature>
<feature type="region of interest" description="Domain IV, binds dsDNA" evidence="1">
    <location>
        <begin position="346"/>
        <end position="465"/>
    </location>
</feature>
<feature type="compositionally biased region" description="Low complexity" evidence="2">
    <location>
        <begin position="88"/>
        <end position="100"/>
    </location>
</feature>
<feature type="binding site" evidence="1">
    <location>
        <position position="173"/>
    </location>
    <ligand>
        <name>ATP</name>
        <dbReference type="ChEBI" id="CHEBI:30616"/>
    </ligand>
</feature>
<feature type="binding site" evidence="1">
    <location>
        <position position="175"/>
    </location>
    <ligand>
        <name>ATP</name>
        <dbReference type="ChEBI" id="CHEBI:30616"/>
    </ligand>
</feature>
<feature type="binding site" evidence="1">
    <location>
        <position position="176"/>
    </location>
    <ligand>
        <name>ATP</name>
        <dbReference type="ChEBI" id="CHEBI:30616"/>
    </ligand>
</feature>
<feature type="binding site" evidence="1">
    <location>
        <position position="177"/>
    </location>
    <ligand>
        <name>ATP</name>
        <dbReference type="ChEBI" id="CHEBI:30616"/>
    </ligand>
</feature>
<sequence>MLWTDCLTRLRQELSDNVFAMWIRPLVAEEVEGILRLYAPNPYWTRYIQENHLELISILAEQLSEGRVRQVEILVDSRPGSILSSSEQPATTTAALQTAPIPQPAKGKREPEPVANTAVSSKSSKKKLLNPQFTFSLFVEGRSNQMAAETCRKVLTQLGASQHNPLFLYGPTGLGKTHLMQAVGNALLQAKPNARVMYMTSESFVQDFVSSLQKGKVEEFKKNCRSLDLLLVDDIHLLAGKEASLVEFFYTFNALLDESKQIILTSDRYPKELTELDPRLVSRFSWGLSVGVEPPDIETRIEILLKKAENSGVDLPRNCALFIAQQVVANVRELEGALNKVVAISRFKGAPIDLDVVRESLKDVLAIRARTISVENIQRVVSEYFRIPLKELVGPKRTRIYARPRQLAMGLARELTGDSFPEIGMAFGGRDHSTVMHACEKVVSLREEDPIFDEDYKNLLRLLQS</sequence>
<gene>
    <name evidence="1" type="primary">dnaA</name>
    <name type="ordered locus">ABSDF0001</name>
</gene>
<keyword id="KW-0067">ATP-binding</keyword>
<keyword id="KW-0963">Cytoplasm</keyword>
<keyword id="KW-0235">DNA replication</keyword>
<keyword id="KW-0238">DNA-binding</keyword>
<keyword id="KW-0446">Lipid-binding</keyword>
<keyword id="KW-0547">Nucleotide-binding</keyword>
<organism>
    <name type="scientific">Acinetobacter baumannii (strain SDF)</name>
    <dbReference type="NCBI Taxonomy" id="509170"/>
    <lineage>
        <taxon>Bacteria</taxon>
        <taxon>Pseudomonadati</taxon>
        <taxon>Pseudomonadota</taxon>
        <taxon>Gammaproteobacteria</taxon>
        <taxon>Moraxellales</taxon>
        <taxon>Moraxellaceae</taxon>
        <taxon>Acinetobacter</taxon>
        <taxon>Acinetobacter calcoaceticus/baumannii complex</taxon>
    </lineage>
</organism>
<comment type="function">
    <text evidence="1">Plays an essential role in the initiation and regulation of chromosomal replication. ATP-DnaA binds to the origin of replication (oriC) to initiate formation of the DNA replication initiation complex once per cell cycle. Binds the DnaA box (a 9 base pair repeat at the origin) and separates the double-stranded (ds)DNA. Forms a right-handed helical filament on oriC DNA; dsDNA binds to the exterior of the filament while single-stranded (ss)DNA is stabiized in the filament's interior. The ATP-DnaA-oriC complex binds and stabilizes one strand of the AT-rich DNA unwinding element (DUE), permitting loading of DNA polymerase. After initiation quickly degrades to an ADP-DnaA complex that is not apt for DNA replication. Binds acidic phospholipids.</text>
</comment>
<comment type="subunit">
    <text evidence="1">Oligomerizes as a right-handed, spiral filament on DNA at oriC.</text>
</comment>
<comment type="subcellular location">
    <subcellularLocation>
        <location evidence="1">Cytoplasm</location>
    </subcellularLocation>
</comment>
<comment type="domain">
    <text evidence="1">Domain I is involved in oligomerization and binding regulators, domain II is flexibile and of varying length in different bacteria, domain III forms the AAA+ region, while domain IV binds dsDNA.</text>
</comment>
<comment type="similarity">
    <text evidence="1">Belongs to the DnaA family.</text>
</comment>
<protein>
    <recommendedName>
        <fullName evidence="1">Chromosomal replication initiator protein DnaA</fullName>
    </recommendedName>
</protein>
<name>DNAA_ACIBS</name>
<accession>B0VMK0</accession>